<sequence>MTAITITDAAHDYLADLLSKQNTPGIGIRVFITQPGTQYAETCIAYCKPGEEKPEDTALGLKSFTAYIDAFSEAFLDDAVVDYATDRMGGQLTIKAPNAKVPNVNADSPVNERINYYLQTEINPGLASHGGQVSLIDVVDDGIAVLKFGGGCQGCGQADVTLREGIERTLLERIPELKGVRDVTDHTQKENAYY</sequence>
<organism>
    <name type="scientific">Pseudomonas fluorescens (strain SBW25)</name>
    <dbReference type="NCBI Taxonomy" id="216595"/>
    <lineage>
        <taxon>Bacteria</taxon>
        <taxon>Pseudomonadati</taxon>
        <taxon>Pseudomonadota</taxon>
        <taxon>Gammaproteobacteria</taxon>
        <taxon>Pseudomonadales</taxon>
        <taxon>Pseudomonadaceae</taxon>
        <taxon>Pseudomonas</taxon>
    </lineage>
</organism>
<name>NFUA_PSEFS</name>
<proteinExistence type="inferred from homology"/>
<protein>
    <recommendedName>
        <fullName evidence="1">Fe/S biogenesis protein NfuA</fullName>
    </recommendedName>
</protein>
<feature type="chain" id="PRO_1000215817" description="Fe/S biogenesis protein NfuA">
    <location>
        <begin position="1"/>
        <end position="194"/>
    </location>
</feature>
<feature type="binding site" evidence="1">
    <location>
        <position position="152"/>
    </location>
    <ligand>
        <name>[4Fe-4S] cluster</name>
        <dbReference type="ChEBI" id="CHEBI:49883"/>
    </ligand>
</feature>
<feature type="binding site" evidence="1">
    <location>
        <position position="155"/>
    </location>
    <ligand>
        <name>[4Fe-4S] cluster</name>
        <dbReference type="ChEBI" id="CHEBI:49883"/>
    </ligand>
</feature>
<reference key="1">
    <citation type="journal article" date="2009" name="Genome Biol.">
        <title>Genomic and genetic analyses of diversity and plant interactions of Pseudomonas fluorescens.</title>
        <authorList>
            <person name="Silby M.W."/>
            <person name="Cerdeno-Tarraga A.M."/>
            <person name="Vernikos G.S."/>
            <person name="Giddens S.R."/>
            <person name="Jackson R.W."/>
            <person name="Preston G.M."/>
            <person name="Zhang X.-X."/>
            <person name="Moon C.D."/>
            <person name="Gehrig S.M."/>
            <person name="Godfrey S.A.C."/>
            <person name="Knight C.G."/>
            <person name="Malone J.G."/>
            <person name="Robinson Z."/>
            <person name="Spiers A.J."/>
            <person name="Harris S."/>
            <person name="Challis G.L."/>
            <person name="Yaxley A.M."/>
            <person name="Harris D."/>
            <person name="Seeger K."/>
            <person name="Murphy L."/>
            <person name="Rutter S."/>
            <person name="Squares R."/>
            <person name="Quail M.A."/>
            <person name="Saunders E."/>
            <person name="Mavromatis K."/>
            <person name="Brettin T.S."/>
            <person name="Bentley S.D."/>
            <person name="Hothersall J."/>
            <person name="Stephens E."/>
            <person name="Thomas C.M."/>
            <person name="Parkhill J."/>
            <person name="Levy S.B."/>
            <person name="Rainey P.B."/>
            <person name="Thomson N.R."/>
        </authorList>
    </citation>
    <scope>NUCLEOTIDE SEQUENCE [LARGE SCALE GENOMIC DNA]</scope>
    <source>
        <strain>SBW25</strain>
    </source>
</reference>
<comment type="function">
    <text evidence="1">Involved in iron-sulfur cluster biogenesis. Binds a 4Fe-4S cluster, can transfer this cluster to apoproteins, and thereby intervenes in the maturation of Fe/S proteins. Could also act as a scaffold/chaperone for damaged Fe/S proteins.</text>
</comment>
<comment type="cofactor">
    <cofactor evidence="1">
        <name>[4Fe-4S] cluster</name>
        <dbReference type="ChEBI" id="CHEBI:49883"/>
    </cofactor>
    <text evidence="1">Binds 1 [4Fe-4S] cluster per subunit. The cluster is presumably bound at the interface of two monomers.</text>
</comment>
<comment type="subunit">
    <text evidence="1">Homodimer.</text>
</comment>
<comment type="similarity">
    <text evidence="1">Belongs to the NfuA family.</text>
</comment>
<accession>C3K9S0</accession>
<dbReference type="EMBL" id="AM181176">
    <property type="protein sequence ID" value="CAY48896.1"/>
    <property type="molecule type" value="Genomic_DNA"/>
</dbReference>
<dbReference type="RefSeq" id="WP_003190728.1">
    <property type="nucleotide sequence ID" value="NC_012660.1"/>
</dbReference>
<dbReference type="SMR" id="C3K9S0"/>
<dbReference type="STRING" id="294.SRM1_02947"/>
<dbReference type="GeneID" id="93499920"/>
<dbReference type="eggNOG" id="COG0316">
    <property type="taxonomic scope" value="Bacteria"/>
</dbReference>
<dbReference type="eggNOG" id="COG0694">
    <property type="taxonomic scope" value="Bacteria"/>
</dbReference>
<dbReference type="HOGENOM" id="CLU_094569_0_0_6"/>
<dbReference type="OrthoDB" id="9785450at2"/>
<dbReference type="GO" id="GO:0051539">
    <property type="term" value="F:4 iron, 4 sulfur cluster binding"/>
    <property type="evidence" value="ECO:0007669"/>
    <property type="project" value="UniProtKB-UniRule"/>
</dbReference>
<dbReference type="GO" id="GO:0005506">
    <property type="term" value="F:iron ion binding"/>
    <property type="evidence" value="ECO:0007669"/>
    <property type="project" value="InterPro"/>
</dbReference>
<dbReference type="GO" id="GO:0016226">
    <property type="term" value="P:iron-sulfur cluster assembly"/>
    <property type="evidence" value="ECO:0007669"/>
    <property type="project" value="UniProtKB-UniRule"/>
</dbReference>
<dbReference type="GO" id="GO:0051604">
    <property type="term" value="P:protein maturation"/>
    <property type="evidence" value="ECO:0007669"/>
    <property type="project" value="UniProtKB-UniRule"/>
</dbReference>
<dbReference type="Gene3D" id="3.30.300.130">
    <property type="entry name" value="Fe-S cluster assembly (FSCA)"/>
    <property type="match status" value="1"/>
</dbReference>
<dbReference type="Gene3D" id="2.60.300.12">
    <property type="entry name" value="HesB-like domain"/>
    <property type="match status" value="1"/>
</dbReference>
<dbReference type="HAMAP" id="MF_01637">
    <property type="entry name" value="Fe_S_biogen_NfuA"/>
    <property type="match status" value="1"/>
</dbReference>
<dbReference type="InterPro" id="IPR017726">
    <property type="entry name" value="Fe/S_biogenesis_protein_NfuA"/>
</dbReference>
<dbReference type="InterPro" id="IPR000361">
    <property type="entry name" value="FeS_biogenesis"/>
</dbReference>
<dbReference type="InterPro" id="IPR034904">
    <property type="entry name" value="FSCA_dom_sf"/>
</dbReference>
<dbReference type="InterPro" id="IPR035903">
    <property type="entry name" value="HesB-like_dom_sf"/>
</dbReference>
<dbReference type="InterPro" id="IPR001075">
    <property type="entry name" value="NIF_FeS_clus_asmbl_NifU_C"/>
</dbReference>
<dbReference type="NCBIfam" id="TIGR03341">
    <property type="entry name" value="YhgI_GntY"/>
    <property type="match status" value="1"/>
</dbReference>
<dbReference type="PANTHER" id="PTHR11178:SF51">
    <property type="entry name" value="FE_S BIOGENESIS PROTEIN NFUA"/>
    <property type="match status" value="1"/>
</dbReference>
<dbReference type="PANTHER" id="PTHR11178">
    <property type="entry name" value="IRON-SULFUR CLUSTER SCAFFOLD PROTEIN NFU-RELATED"/>
    <property type="match status" value="1"/>
</dbReference>
<dbReference type="Pfam" id="PF01521">
    <property type="entry name" value="Fe-S_biosyn"/>
    <property type="match status" value="1"/>
</dbReference>
<dbReference type="Pfam" id="PF01106">
    <property type="entry name" value="NifU"/>
    <property type="match status" value="1"/>
</dbReference>
<dbReference type="SUPFAM" id="SSF117916">
    <property type="entry name" value="Fe-S cluster assembly (FSCA) domain-like"/>
    <property type="match status" value="1"/>
</dbReference>
<dbReference type="SUPFAM" id="SSF89360">
    <property type="entry name" value="HesB-like domain"/>
    <property type="match status" value="1"/>
</dbReference>
<evidence type="ECO:0000255" key="1">
    <source>
        <dbReference type="HAMAP-Rule" id="MF_01637"/>
    </source>
</evidence>
<gene>
    <name evidence="1" type="primary">nfuA</name>
    <name type="ordered locus">PFLU_2664</name>
</gene>
<keyword id="KW-0004">4Fe-4S</keyword>
<keyword id="KW-0408">Iron</keyword>
<keyword id="KW-0411">Iron-sulfur</keyword>
<keyword id="KW-0479">Metal-binding</keyword>